<comment type="similarity">
    <text evidence="2">Belongs to the UPF0337 (CsbD) family.</text>
</comment>
<reference key="1">
    <citation type="journal article" date="2002" name="Lancet">
        <title>Genome and virulence determinants of high virulence community-acquired MRSA.</title>
        <authorList>
            <person name="Baba T."/>
            <person name="Takeuchi F."/>
            <person name="Kuroda M."/>
            <person name="Yuzawa H."/>
            <person name="Aoki K."/>
            <person name="Oguchi A."/>
            <person name="Nagai Y."/>
            <person name="Iwama N."/>
            <person name="Asano K."/>
            <person name="Naimi T."/>
            <person name="Kuroda H."/>
            <person name="Cui L."/>
            <person name="Yamamoto K."/>
            <person name="Hiramatsu K."/>
        </authorList>
    </citation>
    <scope>NUCLEOTIDE SEQUENCE [LARGE SCALE GENOMIC DNA]</scope>
    <source>
        <strain>MW2</strain>
    </source>
</reference>
<proteinExistence type="inferred from homology"/>
<sequence length="60" mass="6682">MADESKFDQFKGNVKETVGNVTDNKELEKEGQQDKATGKAKEVVENAKNKITDAIDKLKK</sequence>
<evidence type="ECO:0000256" key="1">
    <source>
        <dbReference type="SAM" id="MobiDB-lite"/>
    </source>
</evidence>
<evidence type="ECO:0000305" key="2"/>
<dbReference type="EMBL" id="BA000033">
    <property type="protein sequence ID" value="BAB95440.1"/>
    <property type="molecule type" value="Genomic_DNA"/>
</dbReference>
<dbReference type="RefSeq" id="WP_000752909.1">
    <property type="nucleotide sequence ID" value="NC_003923.1"/>
</dbReference>
<dbReference type="SMR" id="Q7A0R0"/>
<dbReference type="KEGG" id="sam:MW1575"/>
<dbReference type="HOGENOM" id="CLU_135567_0_3_9"/>
<dbReference type="Gene3D" id="1.10.1470.10">
    <property type="entry name" value="YjbJ"/>
    <property type="match status" value="1"/>
</dbReference>
<dbReference type="InterPro" id="IPR008462">
    <property type="entry name" value="CsbD"/>
</dbReference>
<dbReference type="InterPro" id="IPR050423">
    <property type="entry name" value="UPF0337_stress_rsp"/>
</dbReference>
<dbReference type="InterPro" id="IPR036629">
    <property type="entry name" value="YjbJ_sf"/>
</dbReference>
<dbReference type="PANTHER" id="PTHR34977">
    <property type="entry name" value="UPF0337 PROTEIN YJBJ"/>
    <property type="match status" value="1"/>
</dbReference>
<dbReference type="PANTHER" id="PTHR34977:SF1">
    <property type="entry name" value="UPF0337 PROTEIN YJBJ"/>
    <property type="match status" value="1"/>
</dbReference>
<dbReference type="Pfam" id="PF05532">
    <property type="entry name" value="CsbD"/>
    <property type="match status" value="1"/>
</dbReference>
<dbReference type="SUPFAM" id="SSF69047">
    <property type="entry name" value="Hypothetical protein YjbJ"/>
    <property type="match status" value="1"/>
</dbReference>
<gene>
    <name type="ordered locus">MW1575</name>
</gene>
<protein>
    <recommendedName>
        <fullName>UPF0337 protein MW1575</fullName>
    </recommendedName>
</protein>
<organism>
    <name type="scientific">Staphylococcus aureus (strain MW2)</name>
    <dbReference type="NCBI Taxonomy" id="196620"/>
    <lineage>
        <taxon>Bacteria</taxon>
        <taxon>Bacillati</taxon>
        <taxon>Bacillota</taxon>
        <taxon>Bacilli</taxon>
        <taxon>Bacillales</taxon>
        <taxon>Staphylococcaceae</taxon>
        <taxon>Staphylococcus</taxon>
    </lineage>
</organism>
<accession>Q7A0R0</accession>
<feature type="chain" id="PRO_0000210037" description="UPF0337 protein MW1575">
    <location>
        <begin position="1"/>
        <end position="60"/>
    </location>
</feature>
<feature type="region of interest" description="Disordered" evidence="1">
    <location>
        <begin position="18"/>
        <end position="41"/>
    </location>
</feature>
<feature type="compositionally biased region" description="Basic and acidic residues" evidence="1">
    <location>
        <begin position="23"/>
        <end position="41"/>
    </location>
</feature>
<name>Y1575_STAAW</name>